<sequence>MTQLYLASASPRRRELLTQLDIPFSVLNVAVKEQRLPEEAAEVYVRRLAHEKATAGVAAAPSDLPVLGADTIVVLNGQVLEKPQDETHAAEMLGQLSGKQHQVMTAVALADKDDILSCLVITDVVFRPLSQQDIERYIASGEPMDKAGAYGIQGKGGCFVRSLNGSYYAVVGLPLVETDELFSNFAALRSARGKHDC</sequence>
<keyword id="KW-0963">Cytoplasm</keyword>
<keyword id="KW-0378">Hydrolase</keyword>
<keyword id="KW-0546">Nucleotide metabolism</keyword>
<keyword id="KW-1185">Reference proteome</keyword>
<organism>
    <name type="scientific">Pectobacterium atrosepticum (strain SCRI 1043 / ATCC BAA-672)</name>
    <name type="common">Erwinia carotovora subsp. atroseptica</name>
    <dbReference type="NCBI Taxonomy" id="218491"/>
    <lineage>
        <taxon>Bacteria</taxon>
        <taxon>Pseudomonadati</taxon>
        <taxon>Pseudomonadota</taxon>
        <taxon>Gammaproteobacteria</taxon>
        <taxon>Enterobacterales</taxon>
        <taxon>Pectobacteriaceae</taxon>
        <taxon>Pectobacterium</taxon>
    </lineage>
</organism>
<evidence type="ECO:0000255" key="1">
    <source>
        <dbReference type="HAMAP-Rule" id="MF_00528"/>
    </source>
</evidence>
<proteinExistence type="inferred from homology"/>
<comment type="function">
    <text evidence="1">Nucleoside triphosphate pyrophosphatase that hydrolyzes dTTP and UTP. May have a dual role in cell division arrest and in preventing the incorporation of modified nucleotides into cellular nucleic acids.</text>
</comment>
<comment type="catalytic activity">
    <reaction evidence="1">
        <text>dTTP + H2O = dTMP + diphosphate + H(+)</text>
        <dbReference type="Rhea" id="RHEA:28534"/>
        <dbReference type="ChEBI" id="CHEBI:15377"/>
        <dbReference type="ChEBI" id="CHEBI:15378"/>
        <dbReference type="ChEBI" id="CHEBI:33019"/>
        <dbReference type="ChEBI" id="CHEBI:37568"/>
        <dbReference type="ChEBI" id="CHEBI:63528"/>
        <dbReference type="EC" id="3.6.1.9"/>
    </reaction>
</comment>
<comment type="catalytic activity">
    <reaction evidence="1">
        <text>UTP + H2O = UMP + diphosphate + H(+)</text>
        <dbReference type="Rhea" id="RHEA:29395"/>
        <dbReference type="ChEBI" id="CHEBI:15377"/>
        <dbReference type="ChEBI" id="CHEBI:15378"/>
        <dbReference type="ChEBI" id="CHEBI:33019"/>
        <dbReference type="ChEBI" id="CHEBI:46398"/>
        <dbReference type="ChEBI" id="CHEBI:57865"/>
        <dbReference type="EC" id="3.6.1.9"/>
    </reaction>
</comment>
<comment type="cofactor">
    <cofactor evidence="1">
        <name>a divalent metal cation</name>
        <dbReference type="ChEBI" id="CHEBI:60240"/>
    </cofactor>
</comment>
<comment type="subcellular location">
    <subcellularLocation>
        <location evidence="1">Cytoplasm</location>
    </subcellularLocation>
</comment>
<comment type="similarity">
    <text evidence="1">Belongs to the Maf family. YhdE subfamily.</text>
</comment>
<reference key="1">
    <citation type="journal article" date="2004" name="Proc. Natl. Acad. Sci. U.S.A.">
        <title>Genome sequence of the enterobacterial phytopathogen Erwinia carotovora subsp. atroseptica and characterization of virulence factors.</title>
        <authorList>
            <person name="Bell K.S."/>
            <person name="Sebaihia M."/>
            <person name="Pritchard L."/>
            <person name="Holden M.T.G."/>
            <person name="Hyman L.J."/>
            <person name="Holeva M.C."/>
            <person name="Thomson N.R."/>
            <person name="Bentley S.D."/>
            <person name="Churcher L.J.C."/>
            <person name="Mungall K."/>
            <person name="Atkin R."/>
            <person name="Bason N."/>
            <person name="Brooks K."/>
            <person name="Chillingworth T."/>
            <person name="Clark K."/>
            <person name="Doggett J."/>
            <person name="Fraser A."/>
            <person name="Hance Z."/>
            <person name="Hauser H."/>
            <person name="Jagels K."/>
            <person name="Moule S."/>
            <person name="Norbertczak H."/>
            <person name="Ormond D."/>
            <person name="Price C."/>
            <person name="Quail M.A."/>
            <person name="Sanders M."/>
            <person name="Walker D."/>
            <person name="Whitehead S."/>
            <person name="Salmond G.P.C."/>
            <person name="Birch P.R.J."/>
            <person name="Parkhill J."/>
            <person name="Toth I.K."/>
        </authorList>
    </citation>
    <scope>NUCLEOTIDE SEQUENCE [LARGE SCALE GENOMIC DNA]</scope>
    <source>
        <strain>SCRI 1043 / ATCC BAA-672</strain>
    </source>
</reference>
<feature type="chain" id="PRO_0000267306" description="dTTP/UTP pyrophosphatase">
    <location>
        <begin position="1"/>
        <end position="197"/>
    </location>
</feature>
<feature type="active site" description="Proton acceptor" evidence="1">
    <location>
        <position position="70"/>
    </location>
</feature>
<feature type="site" description="Important for substrate specificity" evidence="1">
    <location>
        <position position="12"/>
    </location>
</feature>
<feature type="site" description="Important for substrate specificity" evidence="1">
    <location>
        <position position="71"/>
    </location>
</feature>
<feature type="site" description="Important for substrate specificity" evidence="1">
    <location>
        <position position="153"/>
    </location>
</feature>
<dbReference type="EC" id="3.6.1.9" evidence="1"/>
<dbReference type="EMBL" id="BX950851">
    <property type="protein sequence ID" value="CAG73190.1"/>
    <property type="molecule type" value="Genomic_DNA"/>
</dbReference>
<dbReference type="RefSeq" id="WP_011091904.1">
    <property type="nucleotide sequence ID" value="NC_004547.2"/>
</dbReference>
<dbReference type="SMR" id="Q6DAI3"/>
<dbReference type="STRING" id="218491.ECA0270"/>
<dbReference type="KEGG" id="eca:ECA0270"/>
<dbReference type="PATRIC" id="fig|218491.5.peg.272"/>
<dbReference type="eggNOG" id="COG0424">
    <property type="taxonomic scope" value="Bacteria"/>
</dbReference>
<dbReference type="HOGENOM" id="CLU_040416_2_1_6"/>
<dbReference type="OrthoDB" id="9807767at2"/>
<dbReference type="Proteomes" id="UP000007966">
    <property type="component" value="Chromosome"/>
</dbReference>
<dbReference type="GO" id="GO:0005737">
    <property type="term" value="C:cytoplasm"/>
    <property type="evidence" value="ECO:0007669"/>
    <property type="project" value="UniProtKB-SubCell"/>
</dbReference>
<dbReference type="GO" id="GO:0036218">
    <property type="term" value="F:dTTP diphosphatase activity"/>
    <property type="evidence" value="ECO:0007669"/>
    <property type="project" value="RHEA"/>
</dbReference>
<dbReference type="GO" id="GO:0036221">
    <property type="term" value="F:UTP diphosphatase activity"/>
    <property type="evidence" value="ECO:0007669"/>
    <property type="project" value="RHEA"/>
</dbReference>
<dbReference type="GO" id="GO:0009117">
    <property type="term" value="P:nucleotide metabolic process"/>
    <property type="evidence" value="ECO:0007669"/>
    <property type="project" value="UniProtKB-KW"/>
</dbReference>
<dbReference type="CDD" id="cd00555">
    <property type="entry name" value="Maf"/>
    <property type="match status" value="1"/>
</dbReference>
<dbReference type="FunFam" id="3.90.950.10:FF:000004">
    <property type="entry name" value="dTTP/UTP pyrophosphatase"/>
    <property type="match status" value="1"/>
</dbReference>
<dbReference type="Gene3D" id="3.90.950.10">
    <property type="match status" value="1"/>
</dbReference>
<dbReference type="HAMAP" id="MF_00528">
    <property type="entry name" value="Maf"/>
    <property type="match status" value="1"/>
</dbReference>
<dbReference type="InterPro" id="IPR029001">
    <property type="entry name" value="ITPase-like_fam"/>
</dbReference>
<dbReference type="InterPro" id="IPR003697">
    <property type="entry name" value="Maf-like"/>
</dbReference>
<dbReference type="NCBIfam" id="TIGR00172">
    <property type="entry name" value="maf"/>
    <property type="match status" value="1"/>
</dbReference>
<dbReference type="PANTHER" id="PTHR43213">
    <property type="entry name" value="BIFUNCTIONAL DTTP/UTP PYROPHOSPHATASE/METHYLTRANSFERASE PROTEIN-RELATED"/>
    <property type="match status" value="1"/>
</dbReference>
<dbReference type="PANTHER" id="PTHR43213:SF5">
    <property type="entry name" value="BIFUNCTIONAL DTTP_UTP PYROPHOSPHATASE_METHYLTRANSFERASE PROTEIN-RELATED"/>
    <property type="match status" value="1"/>
</dbReference>
<dbReference type="Pfam" id="PF02545">
    <property type="entry name" value="Maf"/>
    <property type="match status" value="1"/>
</dbReference>
<dbReference type="PIRSF" id="PIRSF006305">
    <property type="entry name" value="Maf"/>
    <property type="match status" value="1"/>
</dbReference>
<dbReference type="SUPFAM" id="SSF52972">
    <property type="entry name" value="ITPase-like"/>
    <property type="match status" value="1"/>
</dbReference>
<gene>
    <name type="ordered locus">ECA0270</name>
</gene>
<protein>
    <recommendedName>
        <fullName evidence="1">dTTP/UTP pyrophosphatase</fullName>
        <shortName evidence="1">dTTPase/UTPase</shortName>
        <ecNumber evidence="1">3.6.1.9</ecNumber>
    </recommendedName>
    <alternativeName>
        <fullName evidence="1">Nucleoside triphosphate pyrophosphatase</fullName>
    </alternativeName>
    <alternativeName>
        <fullName evidence="1">Nucleotide pyrophosphatase</fullName>
        <shortName evidence="1">Nucleotide PPase</shortName>
    </alternativeName>
</protein>
<name>NTPPA_PECAS</name>
<accession>Q6DAI3</accession>